<dbReference type="EMBL" id="AAFI02000045">
    <property type="protein sequence ID" value="EAL66390.1"/>
    <property type="molecule type" value="Genomic_DNA"/>
</dbReference>
<dbReference type="RefSeq" id="XP_640370.1">
    <property type="nucleotide sequence ID" value="XM_635278.1"/>
</dbReference>
<dbReference type="SMR" id="Q54SY5"/>
<dbReference type="PaxDb" id="44689-DDB0205150"/>
<dbReference type="EnsemblProtists" id="EAL66390">
    <property type="protein sequence ID" value="EAL66390"/>
    <property type="gene ID" value="DDB_G0282129"/>
</dbReference>
<dbReference type="GeneID" id="8623425"/>
<dbReference type="KEGG" id="ddi:DDB_G0282129"/>
<dbReference type="dictyBase" id="DDB_G0282129"/>
<dbReference type="VEuPathDB" id="AmoebaDB:DDB_G0282129"/>
<dbReference type="eggNOG" id="ENOG502RIPM">
    <property type="taxonomic scope" value="Eukaryota"/>
</dbReference>
<dbReference type="HOGENOM" id="CLU_365027_0_0_1"/>
<dbReference type="InParanoid" id="Q54SY5"/>
<dbReference type="PRO" id="PR:Q54SY5"/>
<dbReference type="Proteomes" id="UP000002195">
    <property type="component" value="Chromosome 3"/>
</dbReference>
<name>Y5150_DICDI</name>
<organism>
    <name type="scientific">Dictyostelium discoideum</name>
    <name type="common">Social amoeba</name>
    <dbReference type="NCBI Taxonomy" id="44689"/>
    <lineage>
        <taxon>Eukaryota</taxon>
        <taxon>Amoebozoa</taxon>
        <taxon>Evosea</taxon>
        <taxon>Eumycetozoa</taxon>
        <taxon>Dictyostelia</taxon>
        <taxon>Dictyosteliales</taxon>
        <taxon>Dictyosteliaceae</taxon>
        <taxon>Dictyostelium</taxon>
    </lineage>
</organism>
<reference key="1">
    <citation type="journal article" date="2005" name="Nature">
        <title>The genome of the social amoeba Dictyostelium discoideum.</title>
        <authorList>
            <person name="Eichinger L."/>
            <person name="Pachebat J.A."/>
            <person name="Gloeckner G."/>
            <person name="Rajandream M.A."/>
            <person name="Sucgang R."/>
            <person name="Berriman M."/>
            <person name="Song J."/>
            <person name="Olsen R."/>
            <person name="Szafranski K."/>
            <person name="Xu Q."/>
            <person name="Tunggal B."/>
            <person name="Kummerfeld S."/>
            <person name="Madera M."/>
            <person name="Konfortov B.A."/>
            <person name="Rivero F."/>
            <person name="Bankier A.T."/>
            <person name="Lehmann R."/>
            <person name="Hamlin N."/>
            <person name="Davies R."/>
            <person name="Gaudet P."/>
            <person name="Fey P."/>
            <person name="Pilcher K."/>
            <person name="Chen G."/>
            <person name="Saunders D."/>
            <person name="Sodergren E.J."/>
            <person name="Davis P."/>
            <person name="Kerhornou A."/>
            <person name="Nie X."/>
            <person name="Hall N."/>
            <person name="Anjard C."/>
            <person name="Hemphill L."/>
            <person name="Bason N."/>
            <person name="Farbrother P."/>
            <person name="Desany B."/>
            <person name="Just E."/>
            <person name="Morio T."/>
            <person name="Rost R."/>
            <person name="Churcher C.M."/>
            <person name="Cooper J."/>
            <person name="Haydock S."/>
            <person name="van Driessche N."/>
            <person name="Cronin A."/>
            <person name="Goodhead I."/>
            <person name="Muzny D.M."/>
            <person name="Mourier T."/>
            <person name="Pain A."/>
            <person name="Lu M."/>
            <person name="Harper D."/>
            <person name="Lindsay R."/>
            <person name="Hauser H."/>
            <person name="James K.D."/>
            <person name="Quiles M."/>
            <person name="Madan Babu M."/>
            <person name="Saito T."/>
            <person name="Buchrieser C."/>
            <person name="Wardroper A."/>
            <person name="Felder M."/>
            <person name="Thangavelu M."/>
            <person name="Johnson D."/>
            <person name="Knights A."/>
            <person name="Loulseged H."/>
            <person name="Mungall K.L."/>
            <person name="Oliver K."/>
            <person name="Price C."/>
            <person name="Quail M.A."/>
            <person name="Urushihara H."/>
            <person name="Hernandez J."/>
            <person name="Rabbinowitsch E."/>
            <person name="Steffen D."/>
            <person name="Sanders M."/>
            <person name="Ma J."/>
            <person name="Kohara Y."/>
            <person name="Sharp S."/>
            <person name="Simmonds M.N."/>
            <person name="Spiegler S."/>
            <person name="Tivey A."/>
            <person name="Sugano S."/>
            <person name="White B."/>
            <person name="Walker D."/>
            <person name="Woodward J.R."/>
            <person name="Winckler T."/>
            <person name="Tanaka Y."/>
            <person name="Shaulsky G."/>
            <person name="Schleicher M."/>
            <person name="Weinstock G.M."/>
            <person name="Rosenthal A."/>
            <person name="Cox E.C."/>
            <person name="Chisholm R.L."/>
            <person name="Gibbs R.A."/>
            <person name="Loomis W.F."/>
            <person name="Platzer M."/>
            <person name="Kay R.R."/>
            <person name="Williams J.G."/>
            <person name="Dear P.H."/>
            <person name="Noegel A.A."/>
            <person name="Barrell B.G."/>
            <person name="Kuspa A."/>
        </authorList>
    </citation>
    <scope>NUCLEOTIDE SEQUENCE [LARGE SCALE GENOMIC DNA]</scope>
    <source>
        <strain>AX4</strain>
    </source>
</reference>
<gene>
    <name type="ORF">DDB_G0282129</name>
</gene>
<protein>
    <recommendedName>
        <fullName>Putative uncharacterized protein DDB_G0282129</fullName>
    </recommendedName>
</protein>
<evidence type="ECO:0000256" key="1">
    <source>
        <dbReference type="SAM" id="MobiDB-lite"/>
    </source>
</evidence>
<sequence length="765" mass="87167">MKFDFLLANDGNNIPNKQIKEDKSSPYEFTSNPNKLDPYSNNINNNNNNNNNNKSSIPSSVSLSSISSISSMPISTSLSLSSPSIVISNNNPVLSNEYQQQQQQQQQQQQQQQQQQQQQQQQQQQQQQQQQPVKTVNKKNSKSNKSNANKNNNNINNNNNNYTSMYDNKIQQQLQSIYKQQQQQQQQQYQTQTQTQTQTQTQTQTQTQTQTQTQNSSGGILNINSSINNNLNIYNNTSSNKFKHQHNQQAYNQNLSEINNSRNVTTSSVNANSNINPYPNSNSSINITTTTTTTTNNEILWTTTKPTSSTKHSVILSPPKKIDSYDSPQSSPPRQSSLLISTSSPPSPPLSPIQPTNIVQSSSSSFSSPTYIQQQQQQQQQQQQQQQQQQQQQQQQQQQQQQVETVNNIGNNKSNHTSLTPNLTSLSTKDYPPMYSLNNNNSININNNNNNNNNNNNNNNNNNNNNNNNNNNNNNNNNNNKINNNHFDLNDYQDDNQSSYSSPDITTTHNRYSQQQQQQNNNNQSNYHIDHLNDKSIMKPTKKQIKKQSQPQEKLSKYSEDQIHEESEFLLASILLNLKDSNSTLPINNNNYNNNIGNFNNSTILKNISTTSSDDIGSSNNDYINGSISNEQHQYYSNKYSNQNYVQIDENNNNKNNKNNYVTNNIVNSNTDNYNYYSSHNDFDNNNNNNNNNNNNNNNNNNNNNNNNNNNNNNNNNNNNNNNNNNNNNNNNSSNNNSRNNYNNNSKKRSSSVQISPYPPSKSRI</sequence>
<keyword id="KW-1185">Reference proteome</keyword>
<feature type="chain" id="PRO_0000351243" description="Putative uncharacterized protein DDB_G0282129">
    <location>
        <begin position="1"/>
        <end position="765"/>
    </location>
</feature>
<feature type="region of interest" description="Disordered" evidence="1">
    <location>
        <begin position="9"/>
        <end position="61"/>
    </location>
</feature>
<feature type="region of interest" description="Disordered" evidence="1">
    <location>
        <begin position="128"/>
        <end position="164"/>
    </location>
</feature>
<feature type="region of interest" description="Disordered" evidence="1">
    <location>
        <begin position="265"/>
        <end position="289"/>
    </location>
</feature>
<feature type="region of interest" description="Disordered" evidence="1">
    <location>
        <begin position="301"/>
        <end position="373"/>
    </location>
</feature>
<feature type="region of interest" description="Disordered" evidence="1">
    <location>
        <begin position="409"/>
        <end position="526"/>
    </location>
</feature>
<feature type="region of interest" description="Disordered" evidence="1">
    <location>
        <begin position="540"/>
        <end position="560"/>
    </location>
</feature>
<feature type="region of interest" description="Disordered" evidence="1">
    <location>
        <begin position="668"/>
        <end position="765"/>
    </location>
</feature>
<feature type="compositionally biased region" description="Low complexity" evidence="1">
    <location>
        <begin position="40"/>
        <end position="61"/>
    </location>
</feature>
<feature type="compositionally biased region" description="Low complexity" evidence="1">
    <location>
        <begin position="143"/>
        <end position="161"/>
    </location>
</feature>
<feature type="compositionally biased region" description="Low complexity" evidence="1">
    <location>
        <begin position="301"/>
        <end position="311"/>
    </location>
</feature>
<feature type="compositionally biased region" description="Low complexity" evidence="1">
    <location>
        <begin position="325"/>
        <end position="344"/>
    </location>
</feature>
<feature type="compositionally biased region" description="Low complexity" evidence="1">
    <location>
        <begin position="353"/>
        <end position="373"/>
    </location>
</feature>
<feature type="compositionally biased region" description="Low complexity" evidence="1">
    <location>
        <begin position="414"/>
        <end position="428"/>
    </location>
</feature>
<feature type="compositionally biased region" description="Low complexity" evidence="1">
    <location>
        <begin position="438"/>
        <end position="485"/>
    </location>
</feature>
<feature type="compositionally biased region" description="Low complexity" evidence="1">
    <location>
        <begin position="495"/>
        <end position="504"/>
    </location>
</feature>
<feature type="compositionally biased region" description="Low complexity" evidence="1">
    <location>
        <begin position="513"/>
        <end position="526"/>
    </location>
</feature>
<feature type="compositionally biased region" description="Low complexity" evidence="1">
    <location>
        <begin position="668"/>
        <end position="745"/>
    </location>
</feature>
<accession>Q54SY5</accession>
<proteinExistence type="predicted"/>